<reference key="1">
    <citation type="journal article" date="2000" name="Nature">
        <title>The genome sequence of the plant pathogen Xylella fastidiosa.</title>
        <authorList>
            <person name="Simpson A.J.G."/>
            <person name="Reinach F.C."/>
            <person name="Arruda P."/>
            <person name="Abreu F.A."/>
            <person name="Acencio M."/>
            <person name="Alvarenga R."/>
            <person name="Alves L.M.C."/>
            <person name="Araya J.E."/>
            <person name="Baia G.S."/>
            <person name="Baptista C.S."/>
            <person name="Barros M.H."/>
            <person name="Bonaccorsi E.D."/>
            <person name="Bordin S."/>
            <person name="Bove J.M."/>
            <person name="Briones M.R.S."/>
            <person name="Bueno M.R.P."/>
            <person name="Camargo A.A."/>
            <person name="Camargo L.E.A."/>
            <person name="Carraro D.M."/>
            <person name="Carrer H."/>
            <person name="Colauto N.B."/>
            <person name="Colombo C."/>
            <person name="Costa F.F."/>
            <person name="Costa M.C.R."/>
            <person name="Costa-Neto C.M."/>
            <person name="Coutinho L.L."/>
            <person name="Cristofani M."/>
            <person name="Dias-Neto E."/>
            <person name="Docena C."/>
            <person name="El-Dorry H."/>
            <person name="Facincani A.P."/>
            <person name="Ferreira A.J.S."/>
            <person name="Ferreira V.C.A."/>
            <person name="Ferro J.A."/>
            <person name="Fraga J.S."/>
            <person name="Franca S.C."/>
            <person name="Franco M.C."/>
            <person name="Frohme M."/>
            <person name="Furlan L.R."/>
            <person name="Garnier M."/>
            <person name="Goldman G.H."/>
            <person name="Goldman M.H.S."/>
            <person name="Gomes S.L."/>
            <person name="Gruber A."/>
            <person name="Ho P.L."/>
            <person name="Hoheisel J.D."/>
            <person name="Junqueira M.L."/>
            <person name="Kemper E.L."/>
            <person name="Kitajima J.P."/>
            <person name="Krieger J.E."/>
            <person name="Kuramae E.E."/>
            <person name="Laigret F."/>
            <person name="Lambais M.R."/>
            <person name="Leite L.C.C."/>
            <person name="Lemos E.G.M."/>
            <person name="Lemos M.V.F."/>
            <person name="Lopes S.A."/>
            <person name="Lopes C.R."/>
            <person name="Machado J.A."/>
            <person name="Machado M.A."/>
            <person name="Madeira A.M.B.N."/>
            <person name="Madeira H.M.F."/>
            <person name="Marino C.L."/>
            <person name="Marques M.V."/>
            <person name="Martins E.A.L."/>
            <person name="Martins E.M.F."/>
            <person name="Matsukuma A.Y."/>
            <person name="Menck C.F.M."/>
            <person name="Miracca E.C."/>
            <person name="Miyaki C.Y."/>
            <person name="Monteiro-Vitorello C.B."/>
            <person name="Moon D.H."/>
            <person name="Nagai M.A."/>
            <person name="Nascimento A.L.T.O."/>
            <person name="Netto L.E.S."/>
            <person name="Nhani A. Jr."/>
            <person name="Nobrega F.G."/>
            <person name="Nunes L.R."/>
            <person name="Oliveira M.A."/>
            <person name="de Oliveira M.C."/>
            <person name="de Oliveira R.C."/>
            <person name="Palmieri D.A."/>
            <person name="Paris A."/>
            <person name="Peixoto B.R."/>
            <person name="Pereira G.A.G."/>
            <person name="Pereira H.A. Jr."/>
            <person name="Pesquero J.B."/>
            <person name="Quaggio R.B."/>
            <person name="Roberto P.G."/>
            <person name="Rodrigues V."/>
            <person name="de Rosa A.J.M."/>
            <person name="de Rosa V.E. Jr."/>
            <person name="de Sa R.G."/>
            <person name="Santelli R.V."/>
            <person name="Sawasaki H.E."/>
            <person name="da Silva A.C.R."/>
            <person name="da Silva A.M."/>
            <person name="da Silva F.R."/>
            <person name="Silva W.A. Jr."/>
            <person name="da Silveira J.F."/>
            <person name="Silvestri M.L.Z."/>
            <person name="Siqueira W.J."/>
            <person name="de Souza A.A."/>
            <person name="de Souza A.P."/>
            <person name="Terenzi M.F."/>
            <person name="Truffi D."/>
            <person name="Tsai S.M."/>
            <person name="Tsuhako M.H."/>
            <person name="Vallada H."/>
            <person name="Van Sluys M.A."/>
            <person name="Verjovski-Almeida S."/>
            <person name="Vettore A.L."/>
            <person name="Zago M.A."/>
            <person name="Zatz M."/>
            <person name="Meidanis J."/>
            <person name="Setubal J.C."/>
        </authorList>
    </citation>
    <scope>NUCLEOTIDE SEQUENCE [LARGE SCALE GENOMIC DNA]</scope>
    <source>
        <strain>9a5c</strain>
    </source>
</reference>
<keyword id="KW-0131">Cell cycle</keyword>
<keyword id="KW-0132">Cell division</keyword>
<keyword id="KW-0717">Septation</keyword>
<feature type="chain" id="PRO_0000189075" description="Probable septum site-determining protein MinC">
    <location>
        <begin position="1"/>
        <end position="238"/>
    </location>
</feature>
<comment type="function">
    <text evidence="1">Cell division inhibitor that blocks the formation of polar Z ring septums. Rapidly oscillates between the poles of the cell to destabilize FtsZ filaments that have formed before they mature into polar Z rings. Prevents FtsZ polymerization (By similarity).</text>
</comment>
<comment type="subunit">
    <text evidence="1">Interacts with MinD and FtsZ.</text>
</comment>
<comment type="similarity">
    <text evidence="2">Belongs to the MinC family.</text>
</comment>
<protein>
    <recommendedName>
        <fullName>Probable septum site-determining protein MinC</fullName>
    </recommendedName>
</protein>
<dbReference type="EMBL" id="AE003849">
    <property type="protein sequence ID" value="AAF84131.1"/>
    <property type="molecule type" value="Genomic_DNA"/>
</dbReference>
<dbReference type="PIR" id="D82695">
    <property type="entry name" value="D82695"/>
</dbReference>
<dbReference type="RefSeq" id="WP_010893827.1">
    <property type="nucleotide sequence ID" value="NC_002488.3"/>
</dbReference>
<dbReference type="SMR" id="Q9PDQ7"/>
<dbReference type="STRING" id="160492.XF_1322"/>
<dbReference type="KEGG" id="xfa:XF_1322"/>
<dbReference type="eggNOG" id="COG0850">
    <property type="taxonomic scope" value="Bacteria"/>
</dbReference>
<dbReference type="HOGENOM" id="CLU_067812_0_1_6"/>
<dbReference type="Proteomes" id="UP000000812">
    <property type="component" value="Chromosome"/>
</dbReference>
<dbReference type="GO" id="GO:0000902">
    <property type="term" value="P:cell morphogenesis"/>
    <property type="evidence" value="ECO:0007669"/>
    <property type="project" value="InterPro"/>
</dbReference>
<dbReference type="GO" id="GO:0000917">
    <property type="term" value="P:division septum assembly"/>
    <property type="evidence" value="ECO:0007669"/>
    <property type="project" value="UniProtKB-KW"/>
</dbReference>
<dbReference type="GO" id="GO:0051302">
    <property type="term" value="P:regulation of cell division"/>
    <property type="evidence" value="ECO:0007669"/>
    <property type="project" value="InterPro"/>
</dbReference>
<dbReference type="GO" id="GO:1901891">
    <property type="term" value="P:regulation of cell septum assembly"/>
    <property type="evidence" value="ECO:0007669"/>
    <property type="project" value="InterPro"/>
</dbReference>
<dbReference type="Gene3D" id="2.160.20.70">
    <property type="match status" value="1"/>
</dbReference>
<dbReference type="Gene3D" id="3.30.70.260">
    <property type="match status" value="1"/>
</dbReference>
<dbReference type="HAMAP" id="MF_00267">
    <property type="entry name" value="MinC"/>
    <property type="match status" value="1"/>
</dbReference>
<dbReference type="InterPro" id="IPR016098">
    <property type="entry name" value="CAP/MinC_C"/>
</dbReference>
<dbReference type="InterPro" id="IPR013033">
    <property type="entry name" value="MinC"/>
</dbReference>
<dbReference type="InterPro" id="IPR036145">
    <property type="entry name" value="MinC_C_sf"/>
</dbReference>
<dbReference type="InterPro" id="IPR007874">
    <property type="entry name" value="MinC_N"/>
</dbReference>
<dbReference type="InterPro" id="IPR005526">
    <property type="entry name" value="Septum_form_inhib_MinC_C"/>
</dbReference>
<dbReference type="NCBIfam" id="TIGR01222">
    <property type="entry name" value="minC"/>
    <property type="match status" value="1"/>
</dbReference>
<dbReference type="PANTHER" id="PTHR34108">
    <property type="entry name" value="SEPTUM SITE-DETERMINING PROTEIN MINC"/>
    <property type="match status" value="1"/>
</dbReference>
<dbReference type="PANTHER" id="PTHR34108:SF1">
    <property type="entry name" value="SEPTUM SITE-DETERMINING PROTEIN MINC"/>
    <property type="match status" value="1"/>
</dbReference>
<dbReference type="Pfam" id="PF03775">
    <property type="entry name" value="MinC_C"/>
    <property type="match status" value="1"/>
</dbReference>
<dbReference type="Pfam" id="PF05209">
    <property type="entry name" value="MinC_N"/>
    <property type="match status" value="1"/>
</dbReference>
<dbReference type="SUPFAM" id="SSF63848">
    <property type="entry name" value="Cell-division inhibitor MinC, C-terminal domain"/>
    <property type="match status" value="1"/>
</dbReference>
<organism>
    <name type="scientific">Xylella fastidiosa (strain 9a5c)</name>
    <dbReference type="NCBI Taxonomy" id="160492"/>
    <lineage>
        <taxon>Bacteria</taxon>
        <taxon>Pseudomonadati</taxon>
        <taxon>Pseudomonadota</taxon>
        <taxon>Gammaproteobacteria</taxon>
        <taxon>Lysobacterales</taxon>
        <taxon>Lysobacteraceae</taxon>
        <taxon>Xylella</taxon>
    </lineage>
</organism>
<accession>Q9PDQ7</accession>
<evidence type="ECO:0000250" key="1"/>
<evidence type="ECO:0000305" key="2"/>
<name>MINC_XYLFA</name>
<gene>
    <name type="primary">minC</name>
    <name type="ordered locus">XF_1322</name>
</gene>
<sequence>MSNVNMDFEQAGELKIGQVGIATLRIRTLNVPRLIQEMSDRVTRAPKLFRRTAVILDFGELPHTPDLTTAKALVEGLRAANVLPVAIAYGTNEIDLLSQQLGLPLLSKFRAHYERQEVAAPPPQSTPPINTGRIQHTTVRSGQQLYAEHCDLTILNTVGAGAEVIADGNIHIYGTLRGRAMAGARGNAEMRIFCRDFQAELIAIAGRYKVLDDIPTELRGKAVQVWLEQNQIKIAALD</sequence>
<proteinExistence type="inferred from homology"/>